<accession>P51583</accession>
<gene>
    <name evidence="5" type="primary">Paics</name>
    <name type="synonym">Ade2</name>
    <name type="synonym">Airc</name>
</gene>
<dbReference type="EC" id="4.1.1.21" evidence="1"/>
<dbReference type="EC" id="6.3.2.6" evidence="1"/>
<dbReference type="EMBL" id="D37979">
    <property type="protein sequence ID" value="BAA07197.1"/>
    <property type="molecule type" value="mRNA"/>
</dbReference>
<dbReference type="EMBL" id="BC072508">
    <property type="protein sequence ID" value="AAH72508.1"/>
    <property type="molecule type" value="mRNA"/>
</dbReference>
<dbReference type="EMBL" id="BC085711">
    <property type="protein sequence ID" value="AAH85711.1"/>
    <property type="molecule type" value="mRNA"/>
</dbReference>
<dbReference type="PIR" id="S55684">
    <property type="entry name" value="S55684"/>
</dbReference>
<dbReference type="RefSeq" id="NP_001420871.1">
    <property type="nucleotide sequence ID" value="NM_001433942.1"/>
</dbReference>
<dbReference type="RefSeq" id="NP_001420872.1">
    <property type="nucleotide sequence ID" value="NM_001433943.1"/>
</dbReference>
<dbReference type="RefSeq" id="NP_543186.1">
    <property type="nucleotide sequence ID" value="NM_080910.4"/>
</dbReference>
<dbReference type="RefSeq" id="XP_006250914.1">
    <property type="nucleotide sequence ID" value="XM_006250852.3"/>
</dbReference>
<dbReference type="RefSeq" id="XP_006250915.1">
    <property type="nucleotide sequence ID" value="XM_006250853.3"/>
</dbReference>
<dbReference type="RefSeq" id="XP_006250916.1">
    <property type="nucleotide sequence ID" value="XM_006250854.3"/>
</dbReference>
<dbReference type="SMR" id="P51583"/>
<dbReference type="FunCoup" id="P51583">
    <property type="interactions" value="2145"/>
</dbReference>
<dbReference type="IntAct" id="P51583">
    <property type="interactions" value="2"/>
</dbReference>
<dbReference type="STRING" id="10116.ENSRNOP00000061495"/>
<dbReference type="iPTMnet" id="P51583"/>
<dbReference type="PhosphoSitePlus" id="P51583"/>
<dbReference type="jPOST" id="P51583"/>
<dbReference type="PaxDb" id="10116-ENSRNOP00000061495"/>
<dbReference type="Ensembl" id="ENSRNOT00000063942.2">
    <property type="protein sequence ID" value="ENSRNOP00000061495.1"/>
    <property type="gene ID" value="ENSRNOG00000002101.7"/>
</dbReference>
<dbReference type="GeneID" id="140946"/>
<dbReference type="KEGG" id="rno:140946"/>
<dbReference type="UCSC" id="RGD:620066">
    <property type="organism name" value="rat"/>
</dbReference>
<dbReference type="AGR" id="RGD:620066"/>
<dbReference type="CTD" id="10606"/>
<dbReference type="RGD" id="620066">
    <property type="gene designation" value="Paics"/>
</dbReference>
<dbReference type="eggNOG" id="KOG2835">
    <property type="taxonomic scope" value="Eukaryota"/>
</dbReference>
<dbReference type="GeneTree" id="ENSGT00390000010172"/>
<dbReference type="HOGENOM" id="CLU_061495_1_0_1"/>
<dbReference type="InParanoid" id="P51583"/>
<dbReference type="OrthoDB" id="25610at9989"/>
<dbReference type="PhylomeDB" id="P51583"/>
<dbReference type="TreeFam" id="TF106384"/>
<dbReference type="Reactome" id="R-RNO-73817">
    <property type="pathway name" value="Purine ribonucleoside monophosphate biosynthesis"/>
</dbReference>
<dbReference type="UniPathway" id="UPA00074">
    <property type="reaction ID" value="UER00130"/>
</dbReference>
<dbReference type="UniPathway" id="UPA00074">
    <property type="reaction ID" value="UER00131"/>
</dbReference>
<dbReference type="PRO" id="PR:P51583"/>
<dbReference type="Proteomes" id="UP000002494">
    <property type="component" value="Chromosome 14"/>
</dbReference>
<dbReference type="Bgee" id="ENSRNOG00000002101">
    <property type="expression patterns" value="Expressed in ovary and 19 other cell types or tissues"/>
</dbReference>
<dbReference type="GO" id="GO:0005737">
    <property type="term" value="C:cytoplasm"/>
    <property type="evidence" value="ECO:0000266"/>
    <property type="project" value="RGD"/>
</dbReference>
<dbReference type="GO" id="GO:0005524">
    <property type="term" value="F:ATP binding"/>
    <property type="evidence" value="ECO:0007669"/>
    <property type="project" value="UniProtKB-KW"/>
</dbReference>
<dbReference type="GO" id="GO:0042802">
    <property type="term" value="F:identical protein binding"/>
    <property type="evidence" value="ECO:0000266"/>
    <property type="project" value="RGD"/>
</dbReference>
<dbReference type="GO" id="GO:0004638">
    <property type="term" value="F:phosphoribosylaminoimidazole carboxylase activity"/>
    <property type="evidence" value="ECO:0000250"/>
    <property type="project" value="UniProtKB"/>
</dbReference>
<dbReference type="GO" id="GO:0004639">
    <property type="term" value="F:phosphoribosylaminoimidazolesuccinocarboxamide synthase activity"/>
    <property type="evidence" value="ECO:0000250"/>
    <property type="project" value="UniProtKB"/>
</dbReference>
<dbReference type="GO" id="GO:0044208">
    <property type="term" value="P:'de novo' AMP biosynthetic process"/>
    <property type="evidence" value="ECO:0000266"/>
    <property type="project" value="RGD"/>
</dbReference>
<dbReference type="GO" id="GO:0006189">
    <property type="term" value="P:'de novo' IMP biosynthetic process"/>
    <property type="evidence" value="ECO:0000266"/>
    <property type="project" value="RGD"/>
</dbReference>
<dbReference type="GO" id="GO:0097294">
    <property type="term" value="P:'de novo' XMP biosynthetic process"/>
    <property type="evidence" value="ECO:0000266"/>
    <property type="project" value="RGD"/>
</dbReference>
<dbReference type="GO" id="GO:0000082">
    <property type="term" value="P:G1/S transition of mitotic cell cycle"/>
    <property type="evidence" value="ECO:0000270"/>
    <property type="project" value="RGD"/>
</dbReference>
<dbReference type="GO" id="GO:0006177">
    <property type="term" value="P:GMP biosynthetic process"/>
    <property type="evidence" value="ECO:0000266"/>
    <property type="project" value="RGD"/>
</dbReference>
<dbReference type="GO" id="GO:0009113">
    <property type="term" value="P:purine nucleobase biosynthetic process"/>
    <property type="evidence" value="ECO:0000250"/>
    <property type="project" value="UniProtKB"/>
</dbReference>
<dbReference type="CDD" id="cd01416">
    <property type="entry name" value="SAICAR_synt_Ade5"/>
    <property type="match status" value="1"/>
</dbReference>
<dbReference type="FunFam" id="3.30.200.20:FF:000183">
    <property type="entry name" value="Probable multifunctional protein ADE2"/>
    <property type="match status" value="1"/>
</dbReference>
<dbReference type="FunFam" id="3.30.470.20:FF:000020">
    <property type="entry name" value="Probable multifunctional protein ADE2"/>
    <property type="match status" value="1"/>
</dbReference>
<dbReference type="FunFam" id="3.40.50.1970:FF:000006">
    <property type="entry name" value="Probable multifunctional protein ADE2"/>
    <property type="match status" value="1"/>
</dbReference>
<dbReference type="Gene3D" id="3.40.50.1970">
    <property type="match status" value="1"/>
</dbReference>
<dbReference type="Gene3D" id="3.30.470.20">
    <property type="entry name" value="ATP-grasp fold, B domain"/>
    <property type="match status" value="1"/>
</dbReference>
<dbReference type="Gene3D" id="3.30.200.20">
    <property type="entry name" value="Phosphorylase Kinase, domain 1"/>
    <property type="match status" value="1"/>
</dbReference>
<dbReference type="HAMAP" id="MF_02045">
    <property type="entry name" value="PurE_classII"/>
    <property type="match status" value="1"/>
</dbReference>
<dbReference type="HAMAP" id="MF_00137">
    <property type="entry name" value="SAICAR_synth"/>
    <property type="match status" value="1"/>
</dbReference>
<dbReference type="InterPro" id="IPR033626">
    <property type="entry name" value="PurE_classII"/>
</dbReference>
<dbReference type="InterPro" id="IPR000031">
    <property type="entry name" value="PurE_dom"/>
</dbReference>
<dbReference type="InterPro" id="IPR028923">
    <property type="entry name" value="SAICAR_synt/ADE2_N"/>
</dbReference>
<dbReference type="InterPro" id="IPR050089">
    <property type="entry name" value="SAICAR_synthetase"/>
</dbReference>
<dbReference type="InterPro" id="IPR018236">
    <property type="entry name" value="SAICAR_synthetase_CS"/>
</dbReference>
<dbReference type="NCBIfam" id="TIGR01162">
    <property type="entry name" value="purE"/>
    <property type="match status" value="1"/>
</dbReference>
<dbReference type="PANTHER" id="PTHR43599:SF11">
    <property type="entry name" value="BIFUNCTIONAL PHOSPHORIBOSYLAMINOIMIDAZOLE CARBOXYLASE_PHOSPHORIBOSYLAMINOIMIDAZOLE SUCCINOCARBOXAMIDE SYNTHETASE"/>
    <property type="match status" value="1"/>
</dbReference>
<dbReference type="PANTHER" id="PTHR43599">
    <property type="entry name" value="MULTIFUNCTIONAL PROTEIN ADE2"/>
    <property type="match status" value="1"/>
</dbReference>
<dbReference type="Pfam" id="PF00731">
    <property type="entry name" value="AIRC"/>
    <property type="match status" value="1"/>
</dbReference>
<dbReference type="Pfam" id="PF01259">
    <property type="entry name" value="SAICAR_synt"/>
    <property type="match status" value="1"/>
</dbReference>
<dbReference type="SMART" id="SM01001">
    <property type="entry name" value="AIRC"/>
    <property type="match status" value="1"/>
</dbReference>
<dbReference type="SUPFAM" id="SSF52255">
    <property type="entry name" value="N5-CAIR mutase (phosphoribosylaminoimidazole carboxylase, PurE)"/>
    <property type="match status" value="1"/>
</dbReference>
<dbReference type="SUPFAM" id="SSF56104">
    <property type="entry name" value="SAICAR synthase-like"/>
    <property type="match status" value="1"/>
</dbReference>
<dbReference type="PROSITE" id="PS01057">
    <property type="entry name" value="SAICAR_SYNTHETASE_1"/>
    <property type="match status" value="1"/>
</dbReference>
<dbReference type="PROSITE" id="PS01058">
    <property type="entry name" value="SAICAR_SYNTHETASE_2"/>
    <property type="match status" value="1"/>
</dbReference>
<proteinExistence type="evidence at protein level"/>
<evidence type="ECO:0000250" key="1">
    <source>
        <dbReference type="UniProtKB" id="P22234"/>
    </source>
</evidence>
<evidence type="ECO:0000250" key="2">
    <source>
        <dbReference type="UniProtKB" id="Q9DCL9"/>
    </source>
</evidence>
<evidence type="ECO:0000303" key="3">
    <source>
    </source>
</evidence>
<evidence type="ECO:0000305" key="4"/>
<evidence type="ECO:0000312" key="5">
    <source>
        <dbReference type="RGD" id="620066"/>
    </source>
</evidence>
<evidence type="ECO:0007744" key="6">
    <source>
    </source>
</evidence>
<protein>
    <recommendedName>
        <fullName evidence="1">Bifunctional phosphoribosylaminoimidazole carboxylase/phosphoribosylaminoimidazole succinocarboxamide synthetase</fullName>
        <shortName evidence="1">PAICS</shortName>
    </recommendedName>
    <domain>
        <recommendedName>
            <fullName evidence="3">Phosphoribosylaminoimidazole carboxylase</fullName>
            <ecNumber evidence="1">4.1.1.21</ecNumber>
        </recommendedName>
        <alternativeName>
            <fullName evidence="3">AIR carboxylase</fullName>
            <shortName evidence="3">AIRC</shortName>
        </alternativeName>
    </domain>
    <domain>
        <recommendedName>
            <fullName evidence="3">Phosphoribosylaminoimidazole succinocarboxamide synthetase</fullName>
            <ecNumber evidence="1">6.3.2.6</ecNumber>
        </recommendedName>
        <alternativeName>
            <fullName evidence="3">SAICAR synthetase</fullName>
        </alternativeName>
    </domain>
</protein>
<comment type="function">
    <text evidence="1">Bifunctional phosphoribosylaminoimidazole carboxylase and phosphoribosylaminoimidazole succinocarboxamide synthetase catalyzing two reactions of the de novo purine biosynthetic pathway.</text>
</comment>
<comment type="catalytic activity">
    <reaction evidence="1">
        <text>5-amino-1-(5-phospho-D-ribosyl)imidazole-4-carboxylate + L-aspartate + ATP = (2S)-2-[5-amino-1-(5-phospho-beta-D-ribosyl)imidazole-4-carboxamido]succinate + ADP + phosphate + 2 H(+)</text>
        <dbReference type="Rhea" id="RHEA:22628"/>
        <dbReference type="ChEBI" id="CHEBI:15378"/>
        <dbReference type="ChEBI" id="CHEBI:29991"/>
        <dbReference type="ChEBI" id="CHEBI:30616"/>
        <dbReference type="ChEBI" id="CHEBI:43474"/>
        <dbReference type="ChEBI" id="CHEBI:58443"/>
        <dbReference type="ChEBI" id="CHEBI:77657"/>
        <dbReference type="ChEBI" id="CHEBI:456216"/>
        <dbReference type="EC" id="6.3.2.6"/>
    </reaction>
    <physiologicalReaction direction="left-to-right" evidence="1">
        <dbReference type="Rhea" id="RHEA:22629"/>
    </physiologicalReaction>
</comment>
<comment type="catalytic activity">
    <reaction evidence="1">
        <text>5-amino-1-(5-phospho-D-ribosyl)imidazole-4-carboxylate + H(+) = 5-amino-1-(5-phospho-beta-D-ribosyl)imidazole + CO2</text>
        <dbReference type="Rhea" id="RHEA:10792"/>
        <dbReference type="ChEBI" id="CHEBI:15378"/>
        <dbReference type="ChEBI" id="CHEBI:16526"/>
        <dbReference type="ChEBI" id="CHEBI:77657"/>
        <dbReference type="ChEBI" id="CHEBI:137981"/>
        <dbReference type="EC" id="4.1.1.21"/>
    </reaction>
    <physiologicalReaction direction="right-to-left" evidence="1">
        <dbReference type="Rhea" id="RHEA:10794"/>
    </physiologicalReaction>
</comment>
<comment type="pathway">
    <text evidence="1">Purine metabolism; IMP biosynthesis via de novo pathway; 5-amino-1-(5-phospho-D-ribosyl)imidazole-4-carboxamide from 5-amino-1-(5-phospho-D-ribosyl)imidazole-4-carboxylate: step 1/2.</text>
</comment>
<comment type="pathway">
    <text evidence="1">Purine metabolism; IMP biosynthesis via de novo pathway; 5-amino-1-(5-phospho-D-ribosyl)imidazole-4-carboxylate from 5-amino-1-(5-phospho-D-ribosyl)imidazole (carboxylase route): step 1/1.</text>
</comment>
<comment type="subunit">
    <text evidence="1">Homooctamer.</text>
</comment>
<comment type="similarity">
    <text evidence="4">In the N-terminal section; belongs to the SAICAR synthetase family.</text>
</comment>
<comment type="similarity">
    <text evidence="4">In the C-terminal section; belongs to the AIR carboxylase family. Class II subfamily.</text>
</comment>
<keyword id="KW-0007">Acetylation</keyword>
<keyword id="KW-0067">ATP-binding</keyword>
<keyword id="KW-0210">Decarboxylase</keyword>
<keyword id="KW-0436">Ligase</keyword>
<keyword id="KW-0456">Lyase</keyword>
<keyword id="KW-0511">Multifunctional enzyme</keyword>
<keyword id="KW-0547">Nucleotide-binding</keyword>
<keyword id="KW-0597">Phosphoprotein</keyword>
<keyword id="KW-0658">Purine biosynthesis</keyword>
<keyword id="KW-1185">Reference proteome</keyword>
<reference key="1">
    <citation type="journal article" date="1995" name="Biochim. Biophys. Acta">
        <title>Rat genomic structure of amidophosphoribosyltransferase, cDNA sequence of aminoimidazole ribonucleotide carboxylase, and cell cycle-dependent expression of these two physically linked genes.</title>
        <authorList>
            <person name="Iwahana H."/>
            <person name="Honda S."/>
            <person name="Tsujisawa T."/>
            <person name="Takahashi Y."/>
            <person name="Adzuma K."/>
            <person name="Katashima R."/>
            <person name="Yamaoka T."/>
            <person name="Moritani M."/>
            <person name="Yoshimoto K."/>
            <person name="Itakura M."/>
        </authorList>
    </citation>
    <scope>NUCLEOTIDE SEQUENCE [MRNA]</scope>
    <source>
        <strain>Fischer</strain>
    </source>
</reference>
<reference key="2">
    <citation type="journal article" date="2004" name="Genome Res.">
        <title>The status, quality, and expansion of the NIH full-length cDNA project: the Mammalian Gene Collection (MGC).</title>
        <authorList>
            <consortium name="The MGC Project Team"/>
        </authorList>
    </citation>
    <scope>NUCLEOTIDE SEQUENCE [LARGE SCALE MRNA]</scope>
    <source>
        <tissue>Heart</tissue>
    </source>
</reference>
<reference key="3">
    <citation type="journal article" date="2012" name="Nat. Commun.">
        <title>Quantitative maps of protein phosphorylation sites across 14 different rat organs and tissues.</title>
        <authorList>
            <person name="Lundby A."/>
            <person name="Secher A."/>
            <person name="Lage K."/>
            <person name="Nordsborg N.B."/>
            <person name="Dmytriyev A."/>
            <person name="Lundby C."/>
            <person name="Olsen J.V."/>
        </authorList>
    </citation>
    <scope>PHOSPHORYLATION [LARGE SCALE ANALYSIS] AT SER-27</scope>
    <scope>IDENTIFICATION BY MASS SPECTROMETRY [LARGE SCALE ANALYSIS]</scope>
</reference>
<name>PUR6_RAT</name>
<organism>
    <name type="scientific">Rattus norvegicus</name>
    <name type="common">Rat</name>
    <dbReference type="NCBI Taxonomy" id="10116"/>
    <lineage>
        <taxon>Eukaryota</taxon>
        <taxon>Metazoa</taxon>
        <taxon>Chordata</taxon>
        <taxon>Craniata</taxon>
        <taxon>Vertebrata</taxon>
        <taxon>Euteleostomi</taxon>
        <taxon>Mammalia</taxon>
        <taxon>Eutheria</taxon>
        <taxon>Euarchontoglires</taxon>
        <taxon>Glires</taxon>
        <taxon>Rodentia</taxon>
        <taxon>Myomorpha</taxon>
        <taxon>Muroidea</taxon>
        <taxon>Muridae</taxon>
        <taxon>Murinae</taxon>
        <taxon>Rattus</taxon>
    </lineage>
</organism>
<sequence>MATAEVLNIGRKLYEGKTKEVYELLDSPGRVLLQSKDQITAGNAARKNHLEGKAAISNKITSCIFQLLQEAGIKTAFTKKCGETAFIAPQCEMIPIEWVCRRIATGSFLKRNPGVKEGYRFYPPKVEMFFKDDANNDPQWSEEQLIAAKFCFAGLVIGQTEVDIMSHATQAIFEILEKSWLPQNCTLVDMKIEFGVDVTTKEIVLADVIDNDSWRLWPSGDRSQQKDKQSYRDLKEVTPEGLQMVKKNFEWVADRVELLLKSNSQCRVVVLMGSTSDLGHCEKIKKACGNFGIPCELRVTSAHKGPDETLRIKAEYEGDGIPTVFVAVAGRSNGLGPVMSGNTAYPVISCPPITADWGAQDVWSSLRLPSGIGCSTILSPEGSAQFAAQIFGLNNHLVWAKLRASKLNTWISLKQADKKIRECNL</sequence>
<feature type="initiator methionine" description="Removed" evidence="1">
    <location>
        <position position="1"/>
    </location>
</feature>
<feature type="chain" id="PRO_0000075033" description="Bifunctional phosphoribosylaminoimidazole carboxylase/phosphoribosylaminoimidazole succinocarboxamide synthetase">
    <location>
        <begin position="2"/>
        <end position="425"/>
    </location>
</feature>
<feature type="region of interest" description="SAICAR synthetase domain" evidence="1">
    <location>
        <begin position="2"/>
        <end position="260"/>
    </location>
</feature>
<feature type="region of interest" description="Linker" evidence="1">
    <location>
        <begin position="261"/>
        <end position="266"/>
    </location>
</feature>
<feature type="region of interest" description="AIR carboxylase domain" evidence="1">
    <location>
        <begin position="267"/>
        <end position="425"/>
    </location>
</feature>
<feature type="binding site" evidence="1">
    <location>
        <position position="332"/>
    </location>
    <ligand>
        <name>CO2</name>
        <dbReference type="ChEBI" id="CHEBI:16526"/>
    </ligand>
</feature>
<feature type="modified residue" description="N-acetylalanine" evidence="1">
    <location>
        <position position="2"/>
    </location>
</feature>
<feature type="modified residue" description="Phosphotyrosine" evidence="2">
    <location>
        <position position="22"/>
    </location>
</feature>
<feature type="modified residue" description="Phosphoserine" evidence="6">
    <location>
        <position position="27"/>
    </location>
</feature>
<feature type="modified residue" description="N6-acetyllysine" evidence="2">
    <location>
        <position position="36"/>
    </location>
</feature>
<feature type="modified residue" description="Phosphoserine" evidence="1">
    <location>
        <position position="107"/>
    </location>
</feature>
<feature type="modified residue" description="Phosphothreonine" evidence="1">
    <location>
        <position position="238"/>
    </location>
</feature>
<feature type="modified residue" description="N6-acetyllysine" evidence="1">
    <location>
        <position position="247"/>
    </location>
</feature>
<feature type="modified residue" description="Phosphoserine" evidence="1">
    <location>
        <position position="274"/>
    </location>
</feature>